<gene>
    <name evidence="1" type="primary">recR</name>
    <name type="ordered locus">PCC8801_1180</name>
</gene>
<name>RECR_RIPO1</name>
<proteinExistence type="inferred from homology"/>
<keyword id="KW-0227">DNA damage</keyword>
<keyword id="KW-0233">DNA recombination</keyword>
<keyword id="KW-0234">DNA repair</keyword>
<keyword id="KW-0479">Metal-binding</keyword>
<keyword id="KW-1185">Reference proteome</keyword>
<keyword id="KW-0862">Zinc</keyword>
<keyword id="KW-0863">Zinc-finger</keyword>
<dbReference type="EMBL" id="CP001287">
    <property type="protein sequence ID" value="ACK65248.1"/>
    <property type="molecule type" value="Genomic_DNA"/>
</dbReference>
<dbReference type="RefSeq" id="WP_012594522.1">
    <property type="nucleotide sequence ID" value="NC_011726.1"/>
</dbReference>
<dbReference type="SMR" id="B7K2B2"/>
<dbReference type="STRING" id="41431.PCC8801_1180"/>
<dbReference type="KEGG" id="cyp:PCC8801_1180"/>
<dbReference type="eggNOG" id="COG0353">
    <property type="taxonomic scope" value="Bacteria"/>
</dbReference>
<dbReference type="HOGENOM" id="CLU_060739_1_0_3"/>
<dbReference type="OrthoDB" id="9802672at2"/>
<dbReference type="Proteomes" id="UP000008204">
    <property type="component" value="Chromosome"/>
</dbReference>
<dbReference type="GO" id="GO:0003677">
    <property type="term" value="F:DNA binding"/>
    <property type="evidence" value="ECO:0007669"/>
    <property type="project" value="UniProtKB-UniRule"/>
</dbReference>
<dbReference type="GO" id="GO:0008270">
    <property type="term" value="F:zinc ion binding"/>
    <property type="evidence" value="ECO:0007669"/>
    <property type="project" value="UniProtKB-KW"/>
</dbReference>
<dbReference type="GO" id="GO:0006310">
    <property type="term" value="P:DNA recombination"/>
    <property type="evidence" value="ECO:0007669"/>
    <property type="project" value="UniProtKB-UniRule"/>
</dbReference>
<dbReference type="GO" id="GO:0006281">
    <property type="term" value="P:DNA repair"/>
    <property type="evidence" value="ECO:0007669"/>
    <property type="project" value="UniProtKB-UniRule"/>
</dbReference>
<dbReference type="CDD" id="cd00080">
    <property type="entry name" value="H3TH_StructSpec-5'-nucleases"/>
    <property type="match status" value="1"/>
</dbReference>
<dbReference type="CDD" id="cd01025">
    <property type="entry name" value="TOPRIM_recR"/>
    <property type="match status" value="1"/>
</dbReference>
<dbReference type="Gene3D" id="3.40.1360.10">
    <property type="match status" value="1"/>
</dbReference>
<dbReference type="Gene3D" id="6.10.250.240">
    <property type="match status" value="1"/>
</dbReference>
<dbReference type="Gene3D" id="1.10.8.420">
    <property type="entry name" value="RecR Domain 1"/>
    <property type="match status" value="1"/>
</dbReference>
<dbReference type="HAMAP" id="MF_00017">
    <property type="entry name" value="RecR"/>
    <property type="match status" value="1"/>
</dbReference>
<dbReference type="InterPro" id="IPR000093">
    <property type="entry name" value="DNA_Rcmb_RecR"/>
</dbReference>
<dbReference type="InterPro" id="IPR003583">
    <property type="entry name" value="Hlx-hairpin-Hlx_DNA-bd_motif"/>
</dbReference>
<dbReference type="InterPro" id="IPR023627">
    <property type="entry name" value="Rcmb_RecR"/>
</dbReference>
<dbReference type="InterPro" id="IPR015967">
    <property type="entry name" value="Rcmb_RecR_Znf"/>
</dbReference>
<dbReference type="InterPro" id="IPR006171">
    <property type="entry name" value="TOPRIM_dom"/>
</dbReference>
<dbReference type="InterPro" id="IPR034137">
    <property type="entry name" value="TOPRIM_RecR"/>
</dbReference>
<dbReference type="NCBIfam" id="TIGR00615">
    <property type="entry name" value="recR"/>
    <property type="match status" value="1"/>
</dbReference>
<dbReference type="PANTHER" id="PTHR30446">
    <property type="entry name" value="RECOMBINATION PROTEIN RECR"/>
    <property type="match status" value="1"/>
</dbReference>
<dbReference type="PANTHER" id="PTHR30446:SF0">
    <property type="entry name" value="RECOMBINATION PROTEIN RECR"/>
    <property type="match status" value="1"/>
</dbReference>
<dbReference type="Pfam" id="PF21175">
    <property type="entry name" value="RecR_C"/>
    <property type="match status" value="1"/>
</dbReference>
<dbReference type="Pfam" id="PF21176">
    <property type="entry name" value="RecR_HhH"/>
    <property type="match status" value="1"/>
</dbReference>
<dbReference type="Pfam" id="PF02132">
    <property type="entry name" value="RecR_ZnF"/>
    <property type="match status" value="1"/>
</dbReference>
<dbReference type="Pfam" id="PF13662">
    <property type="entry name" value="Toprim_4"/>
    <property type="match status" value="1"/>
</dbReference>
<dbReference type="SMART" id="SM00278">
    <property type="entry name" value="HhH1"/>
    <property type="match status" value="1"/>
</dbReference>
<dbReference type="SMART" id="SM00493">
    <property type="entry name" value="TOPRIM"/>
    <property type="match status" value="1"/>
</dbReference>
<dbReference type="SUPFAM" id="SSF111304">
    <property type="entry name" value="Recombination protein RecR"/>
    <property type="match status" value="1"/>
</dbReference>
<dbReference type="PROSITE" id="PS01300">
    <property type="entry name" value="RECR"/>
    <property type="match status" value="1"/>
</dbReference>
<dbReference type="PROSITE" id="PS50880">
    <property type="entry name" value="TOPRIM"/>
    <property type="match status" value="1"/>
</dbReference>
<protein>
    <recommendedName>
        <fullName evidence="1">Recombination protein RecR</fullName>
    </recommendedName>
</protein>
<comment type="function">
    <text evidence="1">May play a role in DNA repair. It seems to be involved in an RecBC-independent recombinational process of DNA repair. It may act with RecF and RecO.</text>
</comment>
<comment type="similarity">
    <text evidence="1">Belongs to the RecR family.</text>
</comment>
<evidence type="ECO:0000255" key="1">
    <source>
        <dbReference type="HAMAP-Rule" id="MF_00017"/>
    </source>
</evidence>
<feature type="chain" id="PRO_1000195377" description="Recombination protein RecR">
    <location>
        <begin position="1"/>
        <end position="197"/>
    </location>
</feature>
<feature type="domain" description="Toprim" evidence="1">
    <location>
        <begin position="79"/>
        <end position="173"/>
    </location>
</feature>
<feature type="zinc finger region" description="C4-type" evidence="1">
    <location>
        <begin position="56"/>
        <end position="71"/>
    </location>
</feature>
<organism>
    <name type="scientific">Rippkaea orientalis (strain PCC 8801 / RF-1)</name>
    <name type="common">Cyanothece sp. (strain PCC 8801)</name>
    <dbReference type="NCBI Taxonomy" id="41431"/>
    <lineage>
        <taxon>Bacteria</taxon>
        <taxon>Bacillati</taxon>
        <taxon>Cyanobacteriota</taxon>
        <taxon>Cyanophyceae</taxon>
        <taxon>Oscillatoriophycideae</taxon>
        <taxon>Chroococcales</taxon>
        <taxon>Aphanothecaceae</taxon>
        <taxon>Rippkaea</taxon>
        <taxon>Rippkaea orientalis</taxon>
    </lineage>
</organism>
<sequence>MYTPPLARLIEQLQRLPGVGPKTAQRLALHILKRPENEIQALASALIEAKKKVGLCNVCFHFSADPICEICRNPNRDKQTICVVADSRDVIALEKTREYKGRYHVLGGVMSPMDGIGPEQLYIQPLVRRVTQDGVKEVILAISPTVEGETTTLYIGQLLKPFTKVTRIAFGLPMGGDLEYADEVTLARALEGRRELD</sequence>
<reference key="1">
    <citation type="journal article" date="2011" name="MBio">
        <title>Novel metabolic attributes of the genus Cyanothece, comprising a group of unicellular nitrogen-fixing Cyanobacteria.</title>
        <authorList>
            <person name="Bandyopadhyay A."/>
            <person name="Elvitigala T."/>
            <person name="Welsh E."/>
            <person name="Stockel J."/>
            <person name="Liberton M."/>
            <person name="Min H."/>
            <person name="Sherman L.A."/>
            <person name="Pakrasi H.B."/>
        </authorList>
    </citation>
    <scope>NUCLEOTIDE SEQUENCE [LARGE SCALE GENOMIC DNA]</scope>
    <source>
        <strain>PCC 8801 / RF-1</strain>
    </source>
</reference>
<accession>B7K2B2</accession>